<gene>
    <name evidence="1" type="primary">rplJ</name>
    <name type="ordered locus">Cphamn1_0317</name>
</gene>
<reference key="1">
    <citation type="submission" date="2008-06" db="EMBL/GenBank/DDBJ databases">
        <title>Complete sequence of Chlorobium phaeobacteroides BS1.</title>
        <authorList>
            <consortium name="US DOE Joint Genome Institute"/>
            <person name="Lucas S."/>
            <person name="Copeland A."/>
            <person name="Lapidus A."/>
            <person name="Glavina del Rio T."/>
            <person name="Dalin E."/>
            <person name="Tice H."/>
            <person name="Bruce D."/>
            <person name="Goodwin L."/>
            <person name="Pitluck S."/>
            <person name="Schmutz J."/>
            <person name="Larimer F."/>
            <person name="Land M."/>
            <person name="Hauser L."/>
            <person name="Kyrpides N."/>
            <person name="Ovchinnikova G."/>
            <person name="Li T."/>
            <person name="Liu Z."/>
            <person name="Zhao F."/>
            <person name="Overmann J."/>
            <person name="Bryant D.A."/>
            <person name="Richardson P."/>
        </authorList>
    </citation>
    <scope>NUCLEOTIDE SEQUENCE [LARGE SCALE GENOMIC DNA]</scope>
    <source>
        <strain>BS1</strain>
    </source>
</reference>
<comment type="function">
    <text evidence="1">Forms part of the ribosomal stalk, playing a central role in the interaction of the ribosome with GTP-bound translation factors.</text>
</comment>
<comment type="subunit">
    <text evidence="1">Part of the ribosomal stalk of the 50S ribosomal subunit. The N-terminus interacts with L11 and the large rRNA to form the base of the stalk. The C-terminus forms an elongated spine to which L12 dimers bind in a sequential fashion forming a multimeric L10(L12)X complex.</text>
</comment>
<comment type="similarity">
    <text evidence="1">Belongs to the universal ribosomal protein uL10 family.</text>
</comment>
<proteinExistence type="inferred from homology"/>
<keyword id="KW-0687">Ribonucleoprotein</keyword>
<keyword id="KW-0689">Ribosomal protein</keyword>
<keyword id="KW-0694">RNA-binding</keyword>
<keyword id="KW-0699">rRNA-binding</keyword>
<evidence type="ECO:0000255" key="1">
    <source>
        <dbReference type="HAMAP-Rule" id="MF_00362"/>
    </source>
</evidence>
<evidence type="ECO:0000305" key="2"/>
<dbReference type="EMBL" id="CP001101">
    <property type="protein sequence ID" value="ACE03286.1"/>
    <property type="molecule type" value="Genomic_DNA"/>
</dbReference>
<dbReference type="SMR" id="B3EL59"/>
<dbReference type="STRING" id="331678.Cphamn1_0317"/>
<dbReference type="KEGG" id="cpb:Cphamn1_0317"/>
<dbReference type="eggNOG" id="COG0244">
    <property type="taxonomic scope" value="Bacteria"/>
</dbReference>
<dbReference type="HOGENOM" id="CLU_092227_2_1_10"/>
<dbReference type="OrthoDB" id="1523686at2"/>
<dbReference type="GO" id="GO:0015934">
    <property type="term" value="C:large ribosomal subunit"/>
    <property type="evidence" value="ECO:0007669"/>
    <property type="project" value="InterPro"/>
</dbReference>
<dbReference type="GO" id="GO:0070180">
    <property type="term" value="F:large ribosomal subunit rRNA binding"/>
    <property type="evidence" value="ECO:0007669"/>
    <property type="project" value="UniProtKB-UniRule"/>
</dbReference>
<dbReference type="GO" id="GO:0003735">
    <property type="term" value="F:structural constituent of ribosome"/>
    <property type="evidence" value="ECO:0007669"/>
    <property type="project" value="InterPro"/>
</dbReference>
<dbReference type="GO" id="GO:0006412">
    <property type="term" value="P:translation"/>
    <property type="evidence" value="ECO:0007669"/>
    <property type="project" value="UniProtKB-UniRule"/>
</dbReference>
<dbReference type="CDD" id="cd05797">
    <property type="entry name" value="Ribosomal_L10"/>
    <property type="match status" value="1"/>
</dbReference>
<dbReference type="Gene3D" id="3.30.70.1730">
    <property type="match status" value="1"/>
</dbReference>
<dbReference type="Gene3D" id="6.10.250.290">
    <property type="match status" value="1"/>
</dbReference>
<dbReference type="HAMAP" id="MF_00362">
    <property type="entry name" value="Ribosomal_uL10"/>
    <property type="match status" value="1"/>
</dbReference>
<dbReference type="InterPro" id="IPR001790">
    <property type="entry name" value="Ribosomal_uL10"/>
</dbReference>
<dbReference type="InterPro" id="IPR043141">
    <property type="entry name" value="Ribosomal_uL10-like_sf"/>
</dbReference>
<dbReference type="InterPro" id="IPR022973">
    <property type="entry name" value="Ribosomal_uL10_bac"/>
</dbReference>
<dbReference type="InterPro" id="IPR047865">
    <property type="entry name" value="Ribosomal_uL10_bac_type"/>
</dbReference>
<dbReference type="InterPro" id="IPR002363">
    <property type="entry name" value="Ribosomal_uL10_CS_bac"/>
</dbReference>
<dbReference type="NCBIfam" id="NF000955">
    <property type="entry name" value="PRK00099.1-1"/>
    <property type="match status" value="1"/>
</dbReference>
<dbReference type="PANTHER" id="PTHR11560">
    <property type="entry name" value="39S RIBOSOMAL PROTEIN L10, MITOCHONDRIAL"/>
    <property type="match status" value="1"/>
</dbReference>
<dbReference type="Pfam" id="PF00466">
    <property type="entry name" value="Ribosomal_L10"/>
    <property type="match status" value="1"/>
</dbReference>
<dbReference type="SUPFAM" id="SSF160369">
    <property type="entry name" value="Ribosomal protein L10-like"/>
    <property type="match status" value="1"/>
</dbReference>
<dbReference type="PROSITE" id="PS01109">
    <property type="entry name" value="RIBOSOMAL_L10"/>
    <property type="match status" value="1"/>
</dbReference>
<sequence length="173" mass="19197">MKREKKEQIVKDVAEKLQKAQGIYLTEFQGLDVEKMAELRNEFRKAGVEYQVAKNTLIKKALENVNGGDRLADGLVNTTGMAIGYDDPIAPAKIIEKFGKKNEMLKFKMATIDGSVFEADKLQVLSKMLSKTENIGRFAGMLNNVISSVPMVINAVMSDLVSVIDQVAKQKQD</sequence>
<accession>B3EL59</accession>
<feature type="chain" id="PRO_1000195536" description="Large ribosomal subunit protein uL10">
    <location>
        <begin position="1"/>
        <end position="173"/>
    </location>
</feature>
<name>RL10_CHLPB</name>
<protein>
    <recommendedName>
        <fullName evidence="1">Large ribosomal subunit protein uL10</fullName>
    </recommendedName>
    <alternativeName>
        <fullName evidence="2">50S ribosomal protein L10</fullName>
    </alternativeName>
</protein>
<organism>
    <name type="scientific">Chlorobium phaeobacteroides (strain BS1)</name>
    <dbReference type="NCBI Taxonomy" id="331678"/>
    <lineage>
        <taxon>Bacteria</taxon>
        <taxon>Pseudomonadati</taxon>
        <taxon>Chlorobiota</taxon>
        <taxon>Chlorobiia</taxon>
        <taxon>Chlorobiales</taxon>
        <taxon>Chlorobiaceae</taxon>
        <taxon>Chlorobium/Pelodictyon group</taxon>
        <taxon>Chlorobium</taxon>
    </lineage>
</organism>